<comment type="function">
    <text evidence="1 2">Bifunctional enzyme that acts both as an endopeptidase and 2-oxoglutarate-dependent monooxygenase. Endopeptidase that cleaves histones N-terminal tails at the carboxyl side of methylated arginine or lysine residues, to generate 'tailless nucleosomes', which may trigger transcription elongation. Preferentially recognizes and cleaves monomethylated and dimethylated arginine residues of histones H2, H3 and H4. After initial cleavage, continues to digest histones tails via its aminopeptidase activity. Upon DNA damage, cleaves the N-terminal tail of histone H3 at monomethylated lysine residues, preferably at monomethylated 'Lys-9' (H3K9me1). The histone variant H3F3A is the major target for cleavage. Additionally, acts as a Fe(2+) and 2-oxoglutarate-dependent monooxygenase, catalyzing (R)-stereospecific hydroxylation at C-3 of 'Arg-137' of RPS6 and 'Arg-141' of RCCD1, but the biological significance of this activity remains to be established. Regulates mitosis through different mechanisms: Plays a role in transcriptional repression of satellite repeats, possibly by regulating H3K36 methylation levels in centromeric regions together with RCCD1. Possibly together with RCCD1, is involved in proper mitotic spindle organization and chromosome segregation. Negatively regulates cell cycle repressor CDKN1A/p21, which controls G1/S phase transition. Required for G2/M phase cell cycle progression. Regulates expression of CCNA1/cyclin-A1, leading to cancer cell proliferation. Also, plays a role in regulating alpha-tubulin acetylation and cytoskeletal microtubule stability involved in epithelial to mesenchymal transition (By similarity). Regulates the circadian gene expression in the liver (By similarity). Represses the transcriptional activator activity of the CLOCK-BMAL1 heterodimer in a catalytically-independent manner (By similarity). Negatively regulates the protein stability and function of CRY1; required for AMPK-FBXL3-induced CRY1 degradation (By similarity).</text>
</comment>
<comment type="catalytic activity">
    <reaction evidence="1">
        <text>L-arginyl-[protein] + 2-oxoglutarate + O2 = (3R)-3-hydroxy-L-arginyl-[protein] + succinate + CO2</text>
        <dbReference type="Rhea" id="RHEA:56744"/>
        <dbReference type="Rhea" id="RHEA-COMP:10532"/>
        <dbReference type="Rhea" id="RHEA-COMP:14712"/>
        <dbReference type="ChEBI" id="CHEBI:15379"/>
        <dbReference type="ChEBI" id="CHEBI:16526"/>
        <dbReference type="ChEBI" id="CHEBI:16810"/>
        <dbReference type="ChEBI" id="CHEBI:29965"/>
        <dbReference type="ChEBI" id="CHEBI:30031"/>
        <dbReference type="ChEBI" id="CHEBI:78294"/>
        <dbReference type="EC" id="1.14.11.73"/>
    </reaction>
</comment>
<comment type="cofactor">
    <cofactor evidence="1">
        <name>Fe(2+)</name>
        <dbReference type="ChEBI" id="CHEBI:29033"/>
    </cofactor>
    <text evidence="1">Binds 1 Fe(2+) ion per subunit.</text>
</comment>
<comment type="subunit">
    <text evidence="1">Can form homodimers (via JmjC domain). Found in a complex with RCCD1. Interacts (via N-terminus) with RCCD1 (via N-terminus); this interaction stimulates H3K36me3 and H3K36me2 demethylation. Interacts (via JmjC domain) with H3C1 (By similarity). Interacts with FBXL3 and PSMD2 (By similarity). Interacts with CRY1 in a FBXL3-dependent manner (By similarity).</text>
</comment>
<comment type="subcellular location">
    <subcellularLocation>
        <location evidence="1">Nucleus</location>
    </subcellularLocation>
    <subcellularLocation>
        <location evidence="1">Chromosome</location>
    </subcellularLocation>
    <text evidence="1">Colocalizes with trimethylated 'Lys-9' of histone H3 (H3K9me3).</text>
</comment>
<comment type="caution">
    <text evidence="1">The demethylase activity of JMJD5 is controversial. Demethylase activity towards H3K36me2 was observed in vivo and in vitro. In addition, demethylase activity towards H3K36me3 when in a complex with RCCD1 has been observed. In contrast, in other studies, JMJD5 was shown not to display any demethylase activity toward methylated H3K36 nor toward other methyllysines in the N-terminal tails of H3 and H4 in vitro.</text>
</comment>
<reference key="1">
    <citation type="journal article" date="2004" name="Genome Res.">
        <title>The status, quality, and expansion of the NIH full-length cDNA project: the Mammalian Gene Collection (MGC).</title>
        <authorList>
            <consortium name="The MGC Project Team"/>
        </authorList>
    </citation>
    <scope>NUCLEOTIDE SEQUENCE [LARGE SCALE MRNA]</scope>
    <source>
        <tissue>Prostate</tissue>
    </source>
</reference>
<proteinExistence type="evidence at transcript level"/>
<feature type="chain" id="PRO_0000292012" description="Bifunctional peptidase and arginyl-hydroxylase JMJD5">
    <location>
        <begin position="1"/>
        <end position="414"/>
    </location>
</feature>
<feature type="domain" description="JmjC" evidence="3">
    <location>
        <begin position="269"/>
        <end position="414"/>
    </location>
</feature>
<feature type="region of interest" description="Interaction with RCCD1" evidence="1">
    <location>
        <begin position="1"/>
        <end position="107"/>
    </location>
</feature>
<feature type="region of interest" description="Disordered" evidence="4">
    <location>
        <begin position="152"/>
        <end position="173"/>
    </location>
</feature>
<feature type="binding site" evidence="1">
    <location>
        <position position="236"/>
    </location>
    <ligand>
        <name>a protein</name>
        <dbReference type="ChEBI" id="CHEBI:16541"/>
    </ligand>
    <ligandPart>
        <name>N(omega)-methyl-L-arginine residue</name>
        <dbReference type="ChEBI" id="CHEBI:65280"/>
    </ligandPart>
</feature>
<feature type="binding site" evidence="1">
    <location>
        <position position="270"/>
    </location>
    <ligand>
        <name>2-oxoglutarate</name>
        <dbReference type="ChEBI" id="CHEBI:16810"/>
    </ligand>
</feature>
<feature type="binding site" evidence="1">
    <location>
        <position position="273"/>
    </location>
    <ligand>
        <name>a protein</name>
        <dbReference type="ChEBI" id="CHEBI:16541"/>
    </ligand>
    <ligandPart>
        <name>N(omega),N(omega)'-dimethyl-L-arginine residue</name>
        <dbReference type="ChEBI" id="CHEBI:88221"/>
    </ligandPart>
</feature>
<feature type="binding site" evidence="1">
    <location>
        <position position="273"/>
    </location>
    <ligand>
        <name>a protein</name>
        <dbReference type="ChEBI" id="CHEBI:16541"/>
    </ligand>
    <ligandPart>
        <name>N(omega)-methyl-L-arginine residue</name>
        <dbReference type="ChEBI" id="CHEBI:65280"/>
    </ligandPart>
</feature>
<feature type="binding site" evidence="1">
    <location>
        <position position="316"/>
    </location>
    <ligand>
        <name>2-oxoglutarate</name>
        <dbReference type="ChEBI" id="CHEBI:16810"/>
    </ligand>
</feature>
<feature type="binding site" evidence="1">
    <location>
        <position position="316"/>
    </location>
    <ligand>
        <name>a protein</name>
        <dbReference type="ChEBI" id="CHEBI:16541"/>
    </ligand>
    <ligandPart>
        <name>N(omega),N(omega)'-dimethyl-L-arginine residue</name>
        <dbReference type="ChEBI" id="CHEBI:88221"/>
    </ligandPart>
</feature>
<feature type="binding site" evidence="1">
    <location>
        <position position="316"/>
    </location>
    <ligand>
        <name>a protein</name>
        <dbReference type="ChEBI" id="CHEBI:16541"/>
    </ligand>
    <ligandPart>
        <name>N(omega)-methyl-L-arginine residue</name>
        <dbReference type="ChEBI" id="CHEBI:65280"/>
    </ligandPart>
</feature>
<feature type="binding site" evidence="1">
    <location>
        <position position="319"/>
    </location>
    <ligand>
        <name>2-oxoglutarate</name>
        <dbReference type="ChEBI" id="CHEBI:16810"/>
    </ligand>
</feature>
<feature type="binding site" evidence="3">
    <location>
        <position position="319"/>
    </location>
    <ligand>
        <name>Fe cation</name>
        <dbReference type="ChEBI" id="CHEBI:24875"/>
        <note>catalytic</note>
    </ligand>
</feature>
<feature type="binding site" evidence="3">
    <location>
        <position position="321"/>
    </location>
    <ligand>
        <name>Fe cation</name>
        <dbReference type="ChEBI" id="CHEBI:24875"/>
        <note>catalytic</note>
    </ligand>
</feature>
<feature type="binding site" evidence="1">
    <location>
        <position position="325"/>
    </location>
    <ligand>
        <name>2-oxoglutarate</name>
        <dbReference type="ChEBI" id="CHEBI:16810"/>
    </ligand>
</feature>
<feature type="binding site" evidence="1">
    <location>
        <position position="334"/>
    </location>
    <ligand>
        <name>2-oxoglutarate</name>
        <dbReference type="ChEBI" id="CHEBI:16810"/>
    </ligand>
</feature>
<feature type="binding site" evidence="1">
    <location>
        <position position="398"/>
    </location>
    <ligand>
        <name>2-oxoglutarate</name>
        <dbReference type="ChEBI" id="CHEBI:16810"/>
    </ligand>
</feature>
<feature type="binding site" evidence="3">
    <location>
        <position position="398"/>
    </location>
    <ligand>
        <name>Fe cation</name>
        <dbReference type="ChEBI" id="CHEBI:24875"/>
        <note>catalytic</note>
    </ligand>
</feature>
<feature type="binding site" evidence="1">
    <location>
        <position position="412"/>
    </location>
    <ligand>
        <name>2-oxoglutarate</name>
        <dbReference type="ChEBI" id="CHEBI:16810"/>
    </ligand>
</feature>
<protein>
    <recommendedName>
        <fullName evidence="1">Bifunctional peptidase and arginyl-hydroxylase JMJD5</fullName>
        <ecNumber evidence="1">1.14.11.73</ecNumber>
        <ecNumber evidence="1">3.4.-.-</ecNumber>
    </recommendedName>
    <alternativeName>
        <fullName evidence="1">JmjC domain-containing protein 5</fullName>
    </alternativeName>
    <alternativeName>
        <fullName evidence="1">Jumonji C domain-containing protein 5</fullName>
    </alternativeName>
    <alternativeName>
        <fullName evidence="1">L-arginine (3R)-hydroxylase KDM8</fullName>
    </alternativeName>
</protein>
<organism>
    <name type="scientific">Rattus norvegicus</name>
    <name type="common">Rat</name>
    <dbReference type="NCBI Taxonomy" id="10116"/>
    <lineage>
        <taxon>Eukaryota</taxon>
        <taxon>Metazoa</taxon>
        <taxon>Chordata</taxon>
        <taxon>Craniata</taxon>
        <taxon>Vertebrata</taxon>
        <taxon>Euteleostomi</taxon>
        <taxon>Mammalia</taxon>
        <taxon>Eutheria</taxon>
        <taxon>Euarchontoglires</taxon>
        <taxon>Glires</taxon>
        <taxon>Rodentia</taxon>
        <taxon>Myomorpha</taxon>
        <taxon>Muroidea</taxon>
        <taxon>Muridae</taxon>
        <taxon>Murinae</taxon>
        <taxon>Rattus</taxon>
    </lineage>
</organism>
<gene>
    <name type="primary">Kdm8</name>
    <name type="synonym">Jmjd5</name>
</gene>
<evidence type="ECO:0000250" key="1">
    <source>
        <dbReference type="UniProtKB" id="Q8N371"/>
    </source>
</evidence>
<evidence type="ECO:0000250" key="2">
    <source>
        <dbReference type="UniProtKB" id="Q9CXT6"/>
    </source>
</evidence>
<evidence type="ECO:0000255" key="3">
    <source>
        <dbReference type="PROSITE-ProRule" id="PRU00538"/>
    </source>
</evidence>
<evidence type="ECO:0000256" key="4">
    <source>
        <dbReference type="SAM" id="MobiDB-lite"/>
    </source>
</evidence>
<name>KDM8_RAT</name>
<accession>Q497B8</accession>
<dbReference type="EC" id="1.14.11.73" evidence="1"/>
<dbReference type="EC" id="3.4.-.-" evidence="1"/>
<dbReference type="EMBL" id="BC100627">
    <property type="protein sequence ID" value="AAI00628.1"/>
    <property type="molecule type" value="mRNA"/>
</dbReference>
<dbReference type="RefSeq" id="NP_001032273.1">
    <property type="nucleotide sequence ID" value="NM_001037196.1"/>
</dbReference>
<dbReference type="SMR" id="Q497B8"/>
<dbReference type="FunCoup" id="Q497B8">
    <property type="interactions" value="691"/>
</dbReference>
<dbReference type="STRING" id="10116.ENSRNOP00000020388"/>
<dbReference type="PhosphoSitePlus" id="Q497B8"/>
<dbReference type="PaxDb" id="10116-ENSRNOP00000020388"/>
<dbReference type="GeneID" id="308976"/>
<dbReference type="KEGG" id="rno:308976"/>
<dbReference type="UCSC" id="RGD:1304823">
    <property type="organism name" value="rat"/>
</dbReference>
<dbReference type="AGR" id="RGD:1304823"/>
<dbReference type="CTD" id="79831"/>
<dbReference type="RGD" id="1304823">
    <property type="gene designation" value="Kdm8"/>
</dbReference>
<dbReference type="eggNOG" id="KOG2132">
    <property type="taxonomic scope" value="Eukaryota"/>
</dbReference>
<dbReference type="InParanoid" id="Q497B8"/>
<dbReference type="OrthoDB" id="30133at9989"/>
<dbReference type="PhylomeDB" id="Q497B8"/>
<dbReference type="Reactome" id="R-RNO-9629569">
    <property type="pathway name" value="Protein hydroxylation"/>
</dbReference>
<dbReference type="PRO" id="PR:Q497B8"/>
<dbReference type="Proteomes" id="UP000002494">
    <property type="component" value="Unplaced"/>
</dbReference>
<dbReference type="GO" id="GO:0005694">
    <property type="term" value="C:chromosome"/>
    <property type="evidence" value="ECO:0007669"/>
    <property type="project" value="UniProtKB-SubCell"/>
</dbReference>
<dbReference type="GO" id="GO:0005634">
    <property type="term" value="C:nucleus"/>
    <property type="evidence" value="ECO:0000250"/>
    <property type="project" value="UniProtKB"/>
</dbReference>
<dbReference type="GO" id="GO:0004177">
    <property type="term" value="F:aminopeptidase activity"/>
    <property type="evidence" value="ECO:0000266"/>
    <property type="project" value="RGD"/>
</dbReference>
<dbReference type="GO" id="GO:0003682">
    <property type="term" value="F:chromatin binding"/>
    <property type="evidence" value="ECO:0000250"/>
    <property type="project" value="UniProtKB"/>
</dbReference>
<dbReference type="GO" id="GO:0004175">
    <property type="term" value="F:endopeptidase activity"/>
    <property type="evidence" value="ECO:0000266"/>
    <property type="project" value="RGD"/>
</dbReference>
<dbReference type="GO" id="GO:0051864">
    <property type="term" value="F:histone H3K36 demethylase activity"/>
    <property type="evidence" value="ECO:0000250"/>
    <property type="project" value="UniProtKB"/>
</dbReference>
<dbReference type="GO" id="GO:0046872">
    <property type="term" value="F:metal ion binding"/>
    <property type="evidence" value="ECO:0007669"/>
    <property type="project" value="UniProtKB-KW"/>
</dbReference>
<dbReference type="GO" id="GO:0035064">
    <property type="term" value="F:methylated histone binding"/>
    <property type="evidence" value="ECO:0000266"/>
    <property type="project" value="RGD"/>
</dbReference>
<dbReference type="GO" id="GO:0002039">
    <property type="term" value="F:p53 binding"/>
    <property type="evidence" value="ECO:0000266"/>
    <property type="project" value="RGD"/>
</dbReference>
<dbReference type="GO" id="GO:0106157">
    <property type="term" value="F:peptidyl-arginine 3-dioxygenase activity"/>
    <property type="evidence" value="ECO:0000250"/>
    <property type="project" value="UniProtKB"/>
</dbReference>
<dbReference type="GO" id="GO:0032922">
    <property type="term" value="P:circadian regulation of gene expression"/>
    <property type="evidence" value="ECO:0000250"/>
    <property type="project" value="UniProtKB"/>
</dbReference>
<dbReference type="GO" id="GO:0048144">
    <property type="term" value="P:fibroblast proliferation"/>
    <property type="evidence" value="ECO:0000266"/>
    <property type="project" value="RGD"/>
</dbReference>
<dbReference type="GO" id="GO:0000086">
    <property type="term" value="P:G2/M transition of mitotic cell cycle"/>
    <property type="evidence" value="ECO:0000250"/>
    <property type="project" value="UniProtKB"/>
</dbReference>
<dbReference type="GO" id="GO:0001701">
    <property type="term" value="P:in utero embryonic development"/>
    <property type="evidence" value="ECO:0000266"/>
    <property type="project" value="RGD"/>
</dbReference>
<dbReference type="GO" id="GO:0045892">
    <property type="term" value="P:negative regulation of DNA-templated transcription"/>
    <property type="evidence" value="ECO:0000250"/>
    <property type="project" value="UniProtKB"/>
</dbReference>
<dbReference type="GO" id="GO:0045893">
    <property type="term" value="P:positive regulation of DNA-templated transcription"/>
    <property type="evidence" value="ECO:0000250"/>
    <property type="project" value="UniProtKB"/>
</dbReference>
<dbReference type="GO" id="GO:0031648">
    <property type="term" value="P:protein destabilization"/>
    <property type="evidence" value="ECO:0000250"/>
    <property type="project" value="UniProtKB"/>
</dbReference>
<dbReference type="GO" id="GO:0006508">
    <property type="term" value="P:proteolysis"/>
    <property type="evidence" value="ECO:0007669"/>
    <property type="project" value="UniProtKB-KW"/>
</dbReference>
<dbReference type="GO" id="GO:1901796">
    <property type="term" value="P:regulation of signal transduction by p53 class mediator"/>
    <property type="evidence" value="ECO:0000266"/>
    <property type="project" value="RGD"/>
</dbReference>
<dbReference type="FunFam" id="2.60.120.650:FF:000019">
    <property type="entry name" value="Bifunctional peptidase and arginyl-hydroxylase JMJD5"/>
    <property type="match status" value="1"/>
</dbReference>
<dbReference type="Gene3D" id="2.60.120.650">
    <property type="entry name" value="Cupin"/>
    <property type="match status" value="1"/>
</dbReference>
<dbReference type="InterPro" id="IPR056520">
    <property type="entry name" value="ARM_KDM8_N"/>
</dbReference>
<dbReference type="InterPro" id="IPR041667">
    <property type="entry name" value="Cupin_8"/>
</dbReference>
<dbReference type="InterPro" id="IPR003347">
    <property type="entry name" value="JmjC_dom"/>
</dbReference>
<dbReference type="PANTHER" id="PTHR12461:SF106">
    <property type="entry name" value="BIFUNCTIONAL PEPTIDASE AND ARGINYL-HYDROXYLASE JMJD5"/>
    <property type="match status" value="1"/>
</dbReference>
<dbReference type="PANTHER" id="PTHR12461">
    <property type="entry name" value="HYPOXIA-INDUCIBLE FACTOR 1 ALPHA INHIBITOR-RELATED"/>
    <property type="match status" value="1"/>
</dbReference>
<dbReference type="Pfam" id="PF24472">
    <property type="entry name" value="ARM_KDM8_N"/>
    <property type="match status" value="1"/>
</dbReference>
<dbReference type="Pfam" id="PF13621">
    <property type="entry name" value="Cupin_8"/>
    <property type="match status" value="1"/>
</dbReference>
<dbReference type="SMART" id="SM00558">
    <property type="entry name" value="JmjC"/>
    <property type="match status" value="1"/>
</dbReference>
<dbReference type="SUPFAM" id="SSF51197">
    <property type="entry name" value="Clavaminate synthase-like"/>
    <property type="match status" value="1"/>
</dbReference>
<dbReference type="PROSITE" id="PS51184">
    <property type="entry name" value="JMJC"/>
    <property type="match status" value="1"/>
</dbReference>
<sequence length="414" mass="47247">MSEDTTEPLVGPSTLWKDLRALLPDTEEELKLDLSEKVDRSMATLLRQALGLFYEGRWQKCLQASEAVLDYSWEKLNTGPWRDVDKEWRRVYSFGCLLKTLCLCQAPQKATAVAEALRVCDMGLLMGAAILGDILLKVATVLQTHLLPRKQPACGPHQDQPATKKAKHDASSTPDVVLDREVPRLRCPPLQHFKKHFLVPGRPVILEGVADHWPCMKKWSLQYIQEIAGCRTVPVEVGSRYTDEDWSQTLMTVNEFIHKYILSEAKDVGYLAQHQLFDQIPELKQDISIPDYCCLGNGEEEEITINAWFGPQGTISPLHQDPQQNFLVQVLGRKYIRLYSPQESEAVYPHETHILHNTSQVDVENPDLEKFPKFTEAPFLSCILSPGDTLFIPAKYWHYVRSLDLSFSVSFWWS</sequence>
<keyword id="KW-0031">Aminopeptidase</keyword>
<keyword id="KW-0090">Biological rhythms</keyword>
<keyword id="KW-0131">Cell cycle</keyword>
<keyword id="KW-0156">Chromatin regulator</keyword>
<keyword id="KW-0158">Chromosome</keyword>
<keyword id="KW-0223">Dioxygenase</keyword>
<keyword id="KW-0378">Hydrolase</keyword>
<keyword id="KW-0408">Iron</keyword>
<keyword id="KW-0479">Metal-binding</keyword>
<keyword id="KW-0539">Nucleus</keyword>
<keyword id="KW-0560">Oxidoreductase</keyword>
<keyword id="KW-0645">Protease</keyword>
<keyword id="KW-1185">Reference proteome</keyword>
<keyword id="KW-0804">Transcription</keyword>
<keyword id="KW-0805">Transcription regulation</keyword>